<name>ATPL_PSEAE</name>
<sequence length="85" mass="8608">METVVGLTAIAVALLIGLGALGTAIGFGLLGGKFLEGAARQPEMVPMLQVKMFIVAGLLDAVTMIGVGIALFFTFANPFVGQIAG</sequence>
<evidence type="ECO:0000255" key="1">
    <source>
        <dbReference type="HAMAP-Rule" id="MF_01396"/>
    </source>
</evidence>
<protein>
    <recommendedName>
        <fullName evidence="1">ATP synthase subunit c</fullName>
    </recommendedName>
    <alternativeName>
        <fullName evidence="1">ATP synthase F(0) sector subunit c</fullName>
    </alternativeName>
    <alternativeName>
        <fullName evidence="1">F-type ATPase subunit c</fullName>
        <shortName evidence="1">F-ATPase subunit c</shortName>
    </alternativeName>
    <alternativeName>
        <fullName evidence="1">Lipid-binding protein</fullName>
    </alternativeName>
</protein>
<dbReference type="EMBL" id="AE004091">
    <property type="protein sequence ID" value="AAG08944.1"/>
    <property type="molecule type" value="Genomic_DNA"/>
</dbReference>
<dbReference type="PIR" id="H82952">
    <property type="entry name" value="H82952"/>
</dbReference>
<dbReference type="RefSeq" id="NP_254246.1">
    <property type="nucleotide sequence ID" value="NC_002516.2"/>
</dbReference>
<dbReference type="RefSeq" id="WP_003097235.1">
    <property type="nucleotide sequence ID" value="NZ_QZGE01000012.1"/>
</dbReference>
<dbReference type="SMR" id="Q9HT15"/>
<dbReference type="FunCoup" id="Q9HT15">
    <property type="interactions" value="205"/>
</dbReference>
<dbReference type="STRING" id="208964.PA5559"/>
<dbReference type="PaxDb" id="208964-PA5559"/>
<dbReference type="DNASU" id="880088"/>
<dbReference type="GeneID" id="880088"/>
<dbReference type="GeneID" id="98280758"/>
<dbReference type="KEGG" id="pae:PA5559"/>
<dbReference type="PATRIC" id="fig|208964.12.peg.5825"/>
<dbReference type="PseudoCAP" id="PA5559"/>
<dbReference type="HOGENOM" id="CLU_148047_1_0_6"/>
<dbReference type="InParanoid" id="Q9HT15"/>
<dbReference type="OrthoDB" id="9811659at2"/>
<dbReference type="PhylomeDB" id="Q9HT15"/>
<dbReference type="BioCyc" id="PAER208964:G1FZ6-5686-MONOMER"/>
<dbReference type="PRO" id="PR:Q9HT15"/>
<dbReference type="Proteomes" id="UP000002438">
    <property type="component" value="Chromosome"/>
</dbReference>
<dbReference type="GO" id="GO:0005886">
    <property type="term" value="C:plasma membrane"/>
    <property type="evidence" value="ECO:0007669"/>
    <property type="project" value="UniProtKB-SubCell"/>
</dbReference>
<dbReference type="GO" id="GO:0045259">
    <property type="term" value="C:proton-transporting ATP synthase complex"/>
    <property type="evidence" value="ECO:0007669"/>
    <property type="project" value="UniProtKB-KW"/>
</dbReference>
<dbReference type="GO" id="GO:0033177">
    <property type="term" value="C:proton-transporting two-sector ATPase complex, proton-transporting domain"/>
    <property type="evidence" value="ECO:0007669"/>
    <property type="project" value="InterPro"/>
</dbReference>
<dbReference type="GO" id="GO:0008289">
    <property type="term" value="F:lipid binding"/>
    <property type="evidence" value="ECO:0007669"/>
    <property type="project" value="UniProtKB-KW"/>
</dbReference>
<dbReference type="GO" id="GO:0046933">
    <property type="term" value="F:proton-transporting ATP synthase activity, rotational mechanism"/>
    <property type="evidence" value="ECO:0007669"/>
    <property type="project" value="UniProtKB-UniRule"/>
</dbReference>
<dbReference type="GO" id="GO:0015986">
    <property type="term" value="P:proton motive force-driven ATP synthesis"/>
    <property type="evidence" value="ECO:0000318"/>
    <property type="project" value="GO_Central"/>
</dbReference>
<dbReference type="CDD" id="cd18185">
    <property type="entry name" value="ATP-synt_Fo_c_ATPE"/>
    <property type="match status" value="1"/>
</dbReference>
<dbReference type="FunFam" id="1.20.20.10:FF:000002">
    <property type="entry name" value="ATP synthase subunit c"/>
    <property type="match status" value="1"/>
</dbReference>
<dbReference type="Gene3D" id="1.20.20.10">
    <property type="entry name" value="F1F0 ATP synthase subunit C"/>
    <property type="match status" value="1"/>
</dbReference>
<dbReference type="HAMAP" id="MF_01396">
    <property type="entry name" value="ATP_synth_c_bact"/>
    <property type="match status" value="1"/>
</dbReference>
<dbReference type="InterPro" id="IPR005953">
    <property type="entry name" value="ATP_synth_csu_bac/chlpt"/>
</dbReference>
<dbReference type="InterPro" id="IPR000454">
    <property type="entry name" value="ATP_synth_F0_csu"/>
</dbReference>
<dbReference type="InterPro" id="IPR020537">
    <property type="entry name" value="ATP_synth_F0_csu_DDCD_BS"/>
</dbReference>
<dbReference type="InterPro" id="IPR038662">
    <property type="entry name" value="ATP_synth_F0_csu_sf"/>
</dbReference>
<dbReference type="InterPro" id="IPR002379">
    <property type="entry name" value="ATPase_proteolipid_c-like_dom"/>
</dbReference>
<dbReference type="InterPro" id="IPR035921">
    <property type="entry name" value="F/V-ATP_Csub_sf"/>
</dbReference>
<dbReference type="NCBIfam" id="TIGR01260">
    <property type="entry name" value="ATP_synt_c"/>
    <property type="match status" value="1"/>
</dbReference>
<dbReference type="NCBIfam" id="NF005363">
    <property type="entry name" value="PRK06876.1"/>
    <property type="match status" value="1"/>
</dbReference>
<dbReference type="Pfam" id="PF00137">
    <property type="entry name" value="ATP-synt_C"/>
    <property type="match status" value="1"/>
</dbReference>
<dbReference type="PRINTS" id="PR00124">
    <property type="entry name" value="ATPASEC"/>
</dbReference>
<dbReference type="SUPFAM" id="SSF81333">
    <property type="entry name" value="F1F0 ATP synthase subunit C"/>
    <property type="match status" value="1"/>
</dbReference>
<dbReference type="PROSITE" id="PS00605">
    <property type="entry name" value="ATPASE_C"/>
    <property type="match status" value="1"/>
</dbReference>
<gene>
    <name evidence="1" type="primary">atpE</name>
    <name type="ordered locus">PA5559</name>
</gene>
<organism>
    <name type="scientific">Pseudomonas aeruginosa (strain ATCC 15692 / DSM 22644 / CIP 104116 / JCM 14847 / LMG 12228 / 1C / PRS 101 / PAO1)</name>
    <dbReference type="NCBI Taxonomy" id="208964"/>
    <lineage>
        <taxon>Bacteria</taxon>
        <taxon>Pseudomonadati</taxon>
        <taxon>Pseudomonadota</taxon>
        <taxon>Gammaproteobacteria</taxon>
        <taxon>Pseudomonadales</taxon>
        <taxon>Pseudomonadaceae</taxon>
        <taxon>Pseudomonas</taxon>
    </lineage>
</organism>
<keyword id="KW-0066">ATP synthesis</keyword>
<keyword id="KW-0997">Cell inner membrane</keyword>
<keyword id="KW-1003">Cell membrane</keyword>
<keyword id="KW-0138">CF(0)</keyword>
<keyword id="KW-0375">Hydrogen ion transport</keyword>
<keyword id="KW-0406">Ion transport</keyword>
<keyword id="KW-0446">Lipid-binding</keyword>
<keyword id="KW-0472">Membrane</keyword>
<keyword id="KW-1185">Reference proteome</keyword>
<keyword id="KW-0812">Transmembrane</keyword>
<keyword id="KW-1133">Transmembrane helix</keyword>
<keyword id="KW-0813">Transport</keyword>
<reference key="1">
    <citation type="journal article" date="2000" name="Nature">
        <title>Complete genome sequence of Pseudomonas aeruginosa PAO1, an opportunistic pathogen.</title>
        <authorList>
            <person name="Stover C.K."/>
            <person name="Pham X.-Q.T."/>
            <person name="Erwin A.L."/>
            <person name="Mizoguchi S.D."/>
            <person name="Warrener P."/>
            <person name="Hickey M.J."/>
            <person name="Brinkman F.S.L."/>
            <person name="Hufnagle W.O."/>
            <person name="Kowalik D.J."/>
            <person name="Lagrou M."/>
            <person name="Garber R.L."/>
            <person name="Goltry L."/>
            <person name="Tolentino E."/>
            <person name="Westbrock-Wadman S."/>
            <person name="Yuan Y."/>
            <person name="Brody L.L."/>
            <person name="Coulter S.N."/>
            <person name="Folger K.R."/>
            <person name="Kas A."/>
            <person name="Larbig K."/>
            <person name="Lim R.M."/>
            <person name="Smith K.A."/>
            <person name="Spencer D.H."/>
            <person name="Wong G.K.-S."/>
            <person name="Wu Z."/>
            <person name="Paulsen I.T."/>
            <person name="Reizer J."/>
            <person name="Saier M.H. Jr."/>
            <person name="Hancock R.E.W."/>
            <person name="Lory S."/>
            <person name="Olson M.V."/>
        </authorList>
    </citation>
    <scope>NUCLEOTIDE SEQUENCE [LARGE SCALE GENOMIC DNA]</scope>
    <source>
        <strain>ATCC 15692 / DSM 22644 / CIP 104116 / JCM 14847 / LMG 12228 / 1C / PRS 101 / PAO1</strain>
    </source>
</reference>
<comment type="function">
    <text evidence="1">F(1)F(0) ATP synthase produces ATP from ADP in the presence of a proton or sodium gradient. F-type ATPases consist of two structural domains, F(1) containing the extramembraneous catalytic core and F(0) containing the membrane proton channel, linked together by a central stalk and a peripheral stalk. During catalysis, ATP synthesis in the catalytic domain of F(1) is coupled via a rotary mechanism of the central stalk subunits to proton translocation.</text>
</comment>
<comment type="function">
    <text evidence="1">Key component of the F(0) channel; it plays a direct role in translocation across the membrane. A homomeric c-ring of between 10-14 subunits forms the central stalk rotor element with the F(1) delta and epsilon subunits.</text>
</comment>
<comment type="subunit">
    <text evidence="1">F-type ATPases have 2 components, F(1) - the catalytic core - and F(0) - the membrane proton channel. F(1) has five subunits: alpha(3), beta(3), gamma(1), delta(1), epsilon(1). F(0) has three main subunits: a(1), b(2) and c(10-14). The alpha and beta chains form an alternating ring which encloses part of the gamma chain. F(1) is attached to F(0) by a central stalk formed by the gamma and epsilon chains, while a peripheral stalk is formed by the delta and b chains.</text>
</comment>
<comment type="subcellular location">
    <subcellularLocation>
        <location evidence="1">Cell inner membrane</location>
        <topology evidence="1">Multi-pass membrane protein</topology>
    </subcellularLocation>
</comment>
<comment type="similarity">
    <text evidence="1">Belongs to the ATPase C chain family.</text>
</comment>
<feature type="chain" id="PRO_0000287747" description="ATP synthase subunit c">
    <location>
        <begin position="1"/>
        <end position="85"/>
    </location>
</feature>
<feature type="transmembrane region" description="Helical" evidence="1">
    <location>
        <begin position="10"/>
        <end position="30"/>
    </location>
</feature>
<feature type="transmembrane region" description="Helical" evidence="1">
    <location>
        <begin position="53"/>
        <end position="73"/>
    </location>
</feature>
<feature type="site" description="Reversibly protonated during proton transport" evidence="1">
    <location>
        <position position="60"/>
    </location>
</feature>
<accession>Q9HT15</accession>
<proteinExistence type="inferred from homology"/>